<proteinExistence type="evidence at protein level"/>
<protein>
    <recommendedName>
        <fullName evidence="2">Large ribosomal subunit protein bL35</fullName>
    </recommendedName>
    <alternativeName>
        <fullName evidence="4">50S ribosomal protein L35</fullName>
    </alternativeName>
</protein>
<keyword id="KW-0002">3D-structure</keyword>
<keyword id="KW-1185">Reference proteome</keyword>
<keyword id="KW-0687">Ribonucleoprotein</keyword>
<keyword id="KW-0689">Ribosomal protein</keyword>
<accession>P0A491</accession>
<accession>O53085</accession>
<feature type="initiator methionine" description="Removed" evidence="1">
    <location>
        <position position="1"/>
    </location>
</feature>
<feature type="chain" id="PRO_0000177377" description="Large ribosomal subunit protein bL35">
    <location>
        <begin position="2"/>
        <end position="66"/>
    </location>
</feature>
<feature type="region of interest" description="Disordered" evidence="3">
    <location>
        <begin position="1"/>
        <end position="50"/>
    </location>
</feature>
<feature type="compositionally biased region" description="Basic residues" evidence="3">
    <location>
        <begin position="1"/>
        <end position="28"/>
    </location>
</feature>
<feature type="helix" evidence="5">
    <location>
        <begin position="8"/>
        <end position="11"/>
    </location>
</feature>
<feature type="strand" evidence="5">
    <location>
        <begin position="22"/>
        <end position="25"/>
    </location>
</feature>
<feature type="turn" evidence="5">
    <location>
        <begin position="33"/>
        <end position="35"/>
    </location>
</feature>
<feature type="helix" evidence="5">
    <location>
        <begin position="38"/>
        <end position="45"/>
    </location>
</feature>
<feature type="strand" evidence="5">
    <location>
        <begin position="46"/>
        <end position="49"/>
    </location>
</feature>
<feature type="helix" evidence="5">
    <location>
        <begin position="52"/>
        <end position="58"/>
    </location>
</feature>
<feature type="helix" evidence="5">
    <location>
        <begin position="59"/>
        <end position="62"/>
    </location>
</feature>
<evidence type="ECO:0000250" key="1"/>
<evidence type="ECO:0000255" key="2">
    <source>
        <dbReference type="HAMAP-Rule" id="MF_00514"/>
    </source>
</evidence>
<evidence type="ECO:0000256" key="3">
    <source>
        <dbReference type="SAM" id="MobiDB-lite"/>
    </source>
</evidence>
<evidence type="ECO:0000305" key="4"/>
<evidence type="ECO:0007829" key="5">
    <source>
        <dbReference type="PDB" id="8A57"/>
    </source>
</evidence>
<reference key="1">
    <citation type="journal article" date="2001" name="Science">
        <title>Comparative genomics of Listeria species.</title>
        <authorList>
            <person name="Glaser P."/>
            <person name="Frangeul L."/>
            <person name="Buchrieser C."/>
            <person name="Rusniok C."/>
            <person name="Amend A."/>
            <person name="Baquero F."/>
            <person name="Berche P."/>
            <person name="Bloecker H."/>
            <person name="Brandt P."/>
            <person name="Chakraborty T."/>
            <person name="Charbit A."/>
            <person name="Chetouani F."/>
            <person name="Couve E."/>
            <person name="de Daruvar A."/>
            <person name="Dehoux P."/>
            <person name="Domann E."/>
            <person name="Dominguez-Bernal G."/>
            <person name="Duchaud E."/>
            <person name="Durant L."/>
            <person name="Dussurget O."/>
            <person name="Entian K.-D."/>
            <person name="Fsihi H."/>
            <person name="Garcia-del Portillo F."/>
            <person name="Garrido P."/>
            <person name="Gautier L."/>
            <person name="Goebel W."/>
            <person name="Gomez-Lopez N."/>
            <person name="Hain T."/>
            <person name="Hauf J."/>
            <person name="Jackson D."/>
            <person name="Jones L.-M."/>
            <person name="Kaerst U."/>
            <person name="Kreft J."/>
            <person name="Kuhn M."/>
            <person name="Kunst F."/>
            <person name="Kurapkat G."/>
            <person name="Madueno E."/>
            <person name="Maitournam A."/>
            <person name="Mata Vicente J."/>
            <person name="Ng E."/>
            <person name="Nedjari H."/>
            <person name="Nordsiek G."/>
            <person name="Novella S."/>
            <person name="de Pablos B."/>
            <person name="Perez-Diaz J.-C."/>
            <person name="Purcell R."/>
            <person name="Remmel B."/>
            <person name="Rose M."/>
            <person name="Schlueter T."/>
            <person name="Simoes N."/>
            <person name="Tierrez A."/>
            <person name="Vazquez-Boland J.-A."/>
            <person name="Voss H."/>
            <person name="Wehland J."/>
            <person name="Cossart P."/>
        </authorList>
    </citation>
    <scope>NUCLEOTIDE SEQUENCE [LARGE SCALE GENOMIC DNA]</scope>
    <source>
        <strain>ATCC BAA-679 / EGD-e</strain>
    </source>
</reference>
<reference key="2">
    <citation type="journal article" date="1998" name="Mol. Gen. Genet.">
        <title>Sequence comparison of the chromosomal regions encompassing the internalin C genes (inlC) of Listeria monocytogenes and L. ivanovii.</title>
        <authorList>
            <person name="Engelbrecht F."/>
            <person name="Dickneite C."/>
            <person name="Lampidis R."/>
            <person name="Goetz M."/>
            <person name="Dasgupta U."/>
            <person name="Goebel W."/>
        </authorList>
    </citation>
    <scope>NUCLEOTIDE SEQUENCE [GENOMIC DNA] OF 1-20</scope>
    <source>
        <strain>EGD / Serovar 1/2a</strain>
    </source>
</reference>
<gene>
    <name evidence="2" type="primary">rpmI</name>
    <name type="ordered locus">lmo1784</name>
</gene>
<dbReference type="EMBL" id="AL591981">
    <property type="protein sequence ID" value="CAC99862.1"/>
    <property type="molecule type" value="Genomic_DNA"/>
</dbReference>
<dbReference type="EMBL" id="Y07640">
    <property type="protein sequence ID" value="CAA68921.1"/>
    <property type="molecule type" value="Genomic_DNA"/>
</dbReference>
<dbReference type="PIR" id="AH1297">
    <property type="entry name" value="AH1297"/>
</dbReference>
<dbReference type="RefSeq" id="NP_465309.1">
    <property type="nucleotide sequence ID" value="NC_003210.1"/>
</dbReference>
<dbReference type="RefSeq" id="WP_003720098.1">
    <property type="nucleotide sequence ID" value="NZ_CP149495.1"/>
</dbReference>
<dbReference type="PDB" id="7NHN">
    <property type="method" value="EM"/>
    <property type="resolution" value="2.90 A"/>
    <property type="chains" value="8=1-66"/>
</dbReference>
<dbReference type="PDB" id="8A57">
    <property type="method" value="EM"/>
    <property type="resolution" value="2.30 A"/>
    <property type="chains" value="8=1-66"/>
</dbReference>
<dbReference type="PDB" id="8A5I">
    <property type="method" value="EM"/>
    <property type="resolution" value="2.30 A"/>
    <property type="chains" value="8=1-66"/>
</dbReference>
<dbReference type="PDB" id="8A63">
    <property type="method" value="EM"/>
    <property type="resolution" value="3.10 A"/>
    <property type="chains" value="8=1-66"/>
</dbReference>
<dbReference type="PDBsum" id="7NHN"/>
<dbReference type="PDBsum" id="8A57"/>
<dbReference type="PDBsum" id="8A5I"/>
<dbReference type="PDBsum" id="8A63"/>
<dbReference type="EMDB" id="EMD-12334"/>
<dbReference type="EMDB" id="EMD-15161"/>
<dbReference type="EMDB" id="EMD-15175"/>
<dbReference type="EMDB" id="EMD-15204"/>
<dbReference type="SMR" id="P0A491"/>
<dbReference type="STRING" id="169963.gene:17594469"/>
<dbReference type="PaxDb" id="169963-lmo1784"/>
<dbReference type="EnsemblBacteria" id="CAC99862">
    <property type="protein sequence ID" value="CAC99862"/>
    <property type="gene ID" value="CAC99862"/>
</dbReference>
<dbReference type="GeneID" id="93239693"/>
<dbReference type="GeneID" id="985946"/>
<dbReference type="KEGG" id="lmo:lmo1784"/>
<dbReference type="PATRIC" id="fig|169963.11.peg.1828"/>
<dbReference type="eggNOG" id="COG0291">
    <property type="taxonomic scope" value="Bacteria"/>
</dbReference>
<dbReference type="HOGENOM" id="CLU_169643_3_0_9"/>
<dbReference type="OrthoDB" id="47476at2"/>
<dbReference type="PhylomeDB" id="P0A491"/>
<dbReference type="BioCyc" id="LMON169963:LMO1784-MONOMER"/>
<dbReference type="Proteomes" id="UP000000817">
    <property type="component" value="Chromosome"/>
</dbReference>
<dbReference type="GO" id="GO:0022625">
    <property type="term" value="C:cytosolic large ribosomal subunit"/>
    <property type="evidence" value="ECO:0000318"/>
    <property type="project" value="GO_Central"/>
</dbReference>
<dbReference type="GO" id="GO:0003735">
    <property type="term" value="F:structural constituent of ribosome"/>
    <property type="evidence" value="ECO:0000318"/>
    <property type="project" value="GO_Central"/>
</dbReference>
<dbReference type="GO" id="GO:0006412">
    <property type="term" value="P:translation"/>
    <property type="evidence" value="ECO:0007669"/>
    <property type="project" value="UniProtKB-UniRule"/>
</dbReference>
<dbReference type="FunFam" id="4.10.410.60:FF:000001">
    <property type="entry name" value="50S ribosomal protein L35"/>
    <property type="match status" value="1"/>
</dbReference>
<dbReference type="Gene3D" id="4.10.410.60">
    <property type="match status" value="1"/>
</dbReference>
<dbReference type="HAMAP" id="MF_00514">
    <property type="entry name" value="Ribosomal_bL35"/>
    <property type="match status" value="1"/>
</dbReference>
<dbReference type="InterPro" id="IPR001706">
    <property type="entry name" value="Ribosomal_bL35"/>
</dbReference>
<dbReference type="InterPro" id="IPR021137">
    <property type="entry name" value="Ribosomal_bL35-like"/>
</dbReference>
<dbReference type="InterPro" id="IPR018265">
    <property type="entry name" value="Ribosomal_bL35_CS"/>
</dbReference>
<dbReference type="InterPro" id="IPR037229">
    <property type="entry name" value="Ribosomal_bL35_sf"/>
</dbReference>
<dbReference type="NCBIfam" id="TIGR00001">
    <property type="entry name" value="rpmI_bact"/>
    <property type="match status" value="1"/>
</dbReference>
<dbReference type="PANTHER" id="PTHR33343">
    <property type="entry name" value="54S RIBOSOMAL PROTEIN BL35M"/>
    <property type="match status" value="1"/>
</dbReference>
<dbReference type="PANTHER" id="PTHR33343:SF1">
    <property type="entry name" value="LARGE RIBOSOMAL SUBUNIT PROTEIN BL35M"/>
    <property type="match status" value="1"/>
</dbReference>
<dbReference type="Pfam" id="PF01632">
    <property type="entry name" value="Ribosomal_L35p"/>
    <property type="match status" value="1"/>
</dbReference>
<dbReference type="PRINTS" id="PR00064">
    <property type="entry name" value="RIBOSOMALL35"/>
</dbReference>
<dbReference type="SUPFAM" id="SSF143034">
    <property type="entry name" value="L35p-like"/>
    <property type="match status" value="1"/>
</dbReference>
<dbReference type="PROSITE" id="PS00936">
    <property type="entry name" value="RIBOSOMAL_L35"/>
    <property type="match status" value="1"/>
</dbReference>
<comment type="similarity">
    <text evidence="2">Belongs to the bacterial ribosomal protein bL35 family.</text>
</comment>
<sequence length="66" mass="7720">MPKMKTHRGSAKRFKRTGSGKLKRRHGFTSHMFANKSQKQKRKLRKSAMVSAGDFKRIRQMVAKMK</sequence>
<organism>
    <name type="scientific">Listeria monocytogenes serovar 1/2a (strain ATCC BAA-679 / EGD-e)</name>
    <dbReference type="NCBI Taxonomy" id="169963"/>
    <lineage>
        <taxon>Bacteria</taxon>
        <taxon>Bacillati</taxon>
        <taxon>Bacillota</taxon>
        <taxon>Bacilli</taxon>
        <taxon>Bacillales</taxon>
        <taxon>Listeriaceae</taxon>
        <taxon>Listeria</taxon>
    </lineage>
</organism>
<name>RL35_LISMO</name>